<protein>
    <recommendedName>
        <fullName>Leucine-rich repeat transmembrane neuronal protein 1</fullName>
    </recommendedName>
</protein>
<feature type="signal peptide" evidence="2">
    <location>
        <begin position="1"/>
        <end position="34"/>
    </location>
</feature>
<feature type="chain" id="PRO_0000018352" description="Leucine-rich repeat transmembrane neuronal protein 1">
    <location>
        <begin position="35"/>
        <end position="522"/>
    </location>
</feature>
<feature type="topological domain" description="Extracellular" evidence="2">
    <location>
        <begin position="35"/>
        <end position="427"/>
    </location>
</feature>
<feature type="transmembrane region" description="Helical" evidence="2">
    <location>
        <begin position="428"/>
        <end position="448"/>
    </location>
</feature>
<feature type="topological domain" description="Cytoplasmic" evidence="2">
    <location>
        <begin position="449"/>
        <end position="522"/>
    </location>
</feature>
<feature type="domain" description="LRRNT">
    <location>
        <begin position="35"/>
        <end position="63"/>
    </location>
</feature>
<feature type="repeat" description="LRR 1">
    <location>
        <begin position="64"/>
        <end position="87"/>
    </location>
</feature>
<feature type="repeat" description="LRR 2">
    <location>
        <begin position="89"/>
        <end position="111"/>
    </location>
</feature>
<feature type="repeat" description="LRR 3">
    <location>
        <begin position="112"/>
        <end position="135"/>
    </location>
</feature>
<feature type="repeat" description="LRR 4">
    <location>
        <begin position="137"/>
        <end position="159"/>
    </location>
</feature>
<feature type="repeat" description="LRR 5">
    <location>
        <begin position="161"/>
        <end position="183"/>
    </location>
</feature>
<feature type="repeat" description="LRR 6">
    <location>
        <begin position="184"/>
        <end position="207"/>
    </location>
</feature>
<feature type="repeat" description="LRR 7">
    <location>
        <begin position="209"/>
        <end position="231"/>
    </location>
</feature>
<feature type="repeat" description="LRR 8">
    <location>
        <begin position="233"/>
        <end position="255"/>
    </location>
</feature>
<feature type="repeat" description="LRR 9">
    <location>
        <begin position="256"/>
        <end position="278"/>
    </location>
</feature>
<feature type="repeat" description="LRR 10">
    <location>
        <begin position="279"/>
        <end position="302"/>
    </location>
</feature>
<feature type="domain" description="LRRCT">
    <location>
        <begin position="314"/>
        <end position="365"/>
    </location>
</feature>
<feature type="region of interest" description="Disordered" evidence="3">
    <location>
        <begin position="382"/>
        <end position="401"/>
    </location>
</feature>
<feature type="glycosylation site" description="N-linked (GlcNAc...) asparagine" evidence="2">
    <location>
        <position position="63"/>
    </location>
</feature>
<feature type="glycosylation site" description="N-linked (GlcNAc...) asparagine" evidence="2">
    <location>
        <position position="130"/>
    </location>
</feature>
<feature type="glycosylation site" description="N-linked (GlcNAc...) asparagine" evidence="2">
    <location>
        <position position="380"/>
    </location>
</feature>
<feature type="sequence conflict" description="In Ref. 1; CAI29644." evidence="4" ref="1">
    <original>P</original>
    <variation>L</variation>
    <location>
        <position position="57"/>
    </location>
</feature>
<feature type="sequence conflict" description="In Ref. 1; CAI29644." evidence="4" ref="1">
    <original>L</original>
    <variation>P</variation>
    <location>
        <position position="501"/>
    </location>
</feature>
<feature type="sequence conflict" description="In Ref. 1; CAI29644." evidence="4" ref="1">
    <original>C</original>
    <variation>R</variation>
    <location>
        <position position="520"/>
    </location>
</feature>
<evidence type="ECO:0000250" key="1"/>
<evidence type="ECO:0000255" key="2"/>
<evidence type="ECO:0000256" key="3">
    <source>
        <dbReference type="SAM" id="MobiDB-lite"/>
    </source>
</evidence>
<evidence type="ECO:0000305" key="4"/>
<sequence length="522" mass="58597">MDFLLLGLCLYWLLRRPSGVVLCLLGACFQMLPAAPSGCPQLCRCEGRLLYCEALNPTEAPHNLSGLLGLSLRYNSLSELRAGQFTGLMQLTWLYLDHNHICSVQGDAFQKLRRVKELTLSSNQITQLPNTTFRPMPNLRSVDLSYNKLQALAPDLFHGLRKLTTLHMRANAIQFVPVRIFQDCRSLKFLDIGYNQLKSLARNSFAGLFKLTELHLEHNDLVKVNFAHFPRLISLHSLCLRRNKVAIVVSSLDWVWNLKKMDLSGNEIEYMEPHVFETVPHLQSLQLDSNRLTYIEPRILNSWKSLTSITLAGNLWDCGRNVCALASWLSNFQGRYDGNLQCASPEYAQGEDVLDAVYAFHLCEDGAEPTSGHLLSAVTNRSDLGPPASSATTLADGGEGQHDGTFEPATVALPGGEHAENAVQIHKVVTGTMALIFSFLIVVLVLYVSWKCFPASLRQLRQCFVTQRRKQKQKQTMHQMAAMSAQEYYVDYKPNHIEGALVIINEYGSCTCHQQPARECEV</sequence>
<keyword id="KW-1003">Cell membrane</keyword>
<keyword id="KW-0325">Glycoprotein</keyword>
<keyword id="KW-0433">Leucine-rich repeat</keyword>
<keyword id="KW-0472">Membrane</keyword>
<keyword id="KW-0628">Postsynaptic cell membrane</keyword>
<keyword id="KW-1185">Reference proteome</keyword>
<keyword id="KW-0677">Repeat</keyword>
<keyword id="KW-0732">Signal</keyword>
<keyword id="KW-0770">Synapse</keyword>
<keyword id="KW-0812">Transmembrane</keyword>
<keyword id="KW-1133">Transmembrane helix</keyword>
<name>LRRT1_PONAB</name>
<gene>
    <name type="primary">LRRTM1</name>
</gene>
<reference key="1">
    <citation type="submission" date="2004-11" db="EMBL/GenBank/DDBJ databases">
        <authorList>
            <consortium name="The German cDNA consortium"/>
        </authorList>
    </citation>
    <scope>NUCLEOTIDE SEQUENCE [LARGE SCALE MRNA]</scope>
    <source>
        <tissue>Brain cortex</tissue>
    </source>
</reference>
<accession>Q5R6B1</accession>
<accession>Q5NVL9</accession>
<proteinExistence type="evidence at transcript level"/>
<comment type="function">
    <text evidence="1">Exhibits strong synaptogenic activity, restricted to excitatory presynaptic differentiation, acting at both pre- and postsynaptic level.</text>
</comment>
<comment type="subcellular location">
    <subcellularLocation>
        <location evidence="1">Cell membrane</location>
        <topology evidence="1">Single-pass type I membrane protein</topology>
    </subcellularLocation>
    <subcellularLocation>
        <location evidence="1">Postsynaptic cell membrane</location>
        <topology evidence="1">Single-pass type I membrane protein</topology>
    </subcellularLocation>
</comment>
<comment type="similarity">
    <text evidence="4">Belongs to the LRRTM family.</text>
</comment>
<comment type="online information" name="Protein Spotlight">
    <link uri="https://www.proteinspotlight.org/back_issues/091"/>
    <text>The hands to say it - Issue 91 of February 2008</text>
</comment>
<organism>
    <name type="scientific">Pongo abelii</name>
    <name type="common">Sumatran orangutan</name>
    <name type="synonym">Pongo pygmaeus abelii</name>
    <dbReference type="NCBI Taxonomy" id="9601"/>
    <lineage>
        <taxon>Eukaryota</taxon>
        <taxon>Metazoa</taxon>
        <taxon>Chordata</taxon>
        <taxon>Craniata</taxon>
        <taxon>Vertebrata</taxon>
        <taxon>Euteleostomi</taxon>
        <taxon>Mammalia</taxon>
        <taxon>Eutheria</taxon>
        <taxon>Euarchontoglires</taxon>
        <taxon>Primates</taxon>
        <taxon>Haplorrhini</taxon>
        <taxon>Catarrhini</taxon>
        <taxon>Hominidae</taxon>
        <taxon>Pongo</taxon>
    </lineage>
</organism>
<dbReference type="EMBL" id="CR860580">
    <property type="protein sequence ID" value="CAH92705.1"/>
    <property type="molecule type" value="mRNA"/>
</dbReference>
<dbReference type="EMBL" id="CR926006">
    <property type="protein sequence ID" value="CAI29644.1"/>
    <property type="molecule type" value="mRNA"/>
</dbReference>
<dbReference type="RefSeq" id="NP_001126583.1">
    <property type="nucleotide sequence ID" value="NM_001133111.1"/>
</dbReference>
<dbReference type="SMR" id="Q5R6B1"/>
<dbReference type="FunCoup" id="Q5R6B1">
    <property type="interactions" value="74"/>
</dbReference>
<dbReference type="GlyCosmos" id="Q5R6B1">
    <property type="glycosylation" value="3 sites, No reported glycans"/>
</dbReference>
<dbReference type="GeneID" id="100173575"/>
<dbReference type="KEGG" id="pon:100173575"/>
<dbReference type="CTD" id="347730"/>
<dbReference type="InParanoid" id="Q5R6B1"/>
<dbReference type="OrthoDB" id="5984255at2759"/>
<dbReference type="Proteomes" id="UP000001595">
    <property type="component" value="Unplaced"/>
</dbReference>
<dbReference type="GO" id="GO:0045211">
    <property type="term" value="C:postsynaptic membrane"/>
    <property type="evidence" value="ECO:0007669"/>
    <property type="project" value="UniProtKB-SubCell"/>
</dbReference>
<dbReference type="GO" id="GO:0038023">
    <property type="term" value="F:signaling receptor activity"/>
    <property type="evidence" value="ECO:0007669"/>
    <property type="project" value="TreeGrafter"/>
</dbReference>
<dbReference type="GO" id="GO:0006954">
    <property type="term" value="P:inflammatory response"/>
    <property type="evidence" value="ECO:0007669"/>
    <property type="project" value="TreeGrafter"/>
</dbReference>
<dbReference type="GO" id="GO:0002224">
    <property type="term" value="P:toll-like receptor signaling pathway"/>
    <property type="evidence" value="ECO:0007669"/>
    <property type="project" value="TreeGrafter"/>
</dbReference>
<dbReference type="FunFam" id="3.80.10.10:FF:000005">
    <property type="entry name" value="leucine-rich repeat transmembrane neuronal protein 4"/>
    <property type="match status" value="1"/>
</dbReference>
<dbReference type="Gene3D" id="3.80.10.10">
    <property type="entry name" value="Ribonuclease Inhibitor"/>
    <property type="match status" value="1"/>
</dbReference>
<dbReference type="InterPro" id="IPR001611">
    <property type="entry name" value="Leu-rich_rpt"/>
</dbReference>
<dbReference type="InterPro" id="IPR003591">
    <property type="entry name" value="Leu-rich_rpt_typical-subtyp"/>
</dbReference>
<dbReference type="InterPro" id="IPR032675">
    <property type="entry name" value="LRR_dom_sf"/>
</dbReference>
<dbReference type="PANTHER" id="PTHR24365:SF522">
    <property type="entry name" value="LOW QUALITY PROTEIN: TOLL-LIKE RECEPTOR 13-RELATED"/>
    <property type="match status" value="1"/>
</dbReference>
<dbReference type="PANTHER" id="PTHR24365">
    <property type="entry name" value="TOLL-LIKE RECEPTOR"/>
    <property type="match status" value="1"/>
</dbReference>
<dbReference type="Pfam" id="PF13855">
    <property type="entry name" value="LRR_8"/>
    <property type="match status" value="3"/>
</dbReference>
<dbReference type="SMART" id="SM00369">
    <property type="entry name" value="LRR_TYP"/>
    <property type="match status" value="9"/>
</dbReference>
<dbReference type="SUPFAM" id="SSF52058">
    <property type="entry name" value="L domain-like"/>
    <property type="match status" value="1"/>
</dbReference>
<dbReference type="PROSITE" id="PS51450">
    <property type="entry name" value="LRR"/>
    <property type="match status" value="9"/>
</dbReference>